<feature type="chain" id="PRO_1000099496" description="UvrABC system protein C">
    <location>
        <begin position="1"/>
        <end position="603"/>
    </location>
</feature>
<feature type="domain" description="GIY-YIG" evidence="1">
    <location>
        <begin position="15"/>
        <end position="92"/>
    </location>
</feature>
<feature type="domain" description="UVR" evidence="1">
    <location>
        <begin position="197"/>
        <end position="232"/>
    </location>
</feature>
<accession>B2GBC9</accession>
<sequence>MASEYLEHKLALLPDQPGCYLMKNANAQIIYVGKAKNLKNRVRSYFKSSHTGKVAAMVEEVADFETIVTSSNKESFLLEITLIQKHQPYYNIKLKRGTGYPYIKITNERDPIIKITGQVKKDGAYYFGPYPNVYAAEETVHFIQKVFPLRRCHGYQGRPCLYYHLGQCLGCCFKEVPEEEYAVQTKRIKSFLNGNTAQVKKQLTARMERAAGQLEFERAAEIRDQLHYIEVTVEKQKIISNDKTPRDLFNFYLDKGWLSIQVFFIRQARLMKREKRLFPVVDTAEEEMTSFILQFYNRRNKLLPKEILLPEGLPNQEIEEILGVPVRTPQRGEKRDLLDMAKENAILSLNEKFRLLEMDRQKTTGAMKEITDELGLPTGHVIEAFDHSHIQGADPVSAMVVFVNGEPAKKLYRKYKLTTVVDHADEAASTREVIFRRYSRLLKEEKPMPDMIMMDGGPIQMEAAKDVLENQLGLNIPVIGMVKNDKHQTADLLYGDDAHHVNLDPRSQGFYLVQRIQDEVHRFAITYHRKVHTKHSLSSRLDEIHGVGPRTRNKLLKAFGSINKIAVAPVEEIRALGINQTTAQLIKVSLQGQAEVKKGSSHD</sequence>
<organism>
    <name type="scientific">Limosilactobacillus fermentum (strain NBRC 3956 / LMG 18251)</name>
    <name type="common">Lactobacillus fermentum</name>
    <dbReference type="NCBI Taxonomy" id="334390"/>
    <lineage>
        <taxon>Bacteria</taxon>
        <taxon>Bacillati</taxon>
        <taxon>Bacillota</taxon>
        <taxon>Bacilli</taxon>
        <taxon>Lactobacillales</taxon>
        <taxon>Lactobacillaceae</taxon>
        <taxon>Limosilactobacillus</taxon>
    </lineage>
</organism>
<evidence type="ECO:0000255" key="1">
    <source>
        <dbReference type="HAMAP-Rule" id="MF_00203"/>
    </source>
</evidence>
<name>UVRC_LIMF3</name>
<comment type="function">
    <text evidence="1">The UvrABC repair system catalyzes the recognition and processing of DNA lesions. UvrC both incises the 5' and 3' sides of the lesion. The N-terminal half is responsible for the 3' incision and the C-terminal half is responsible for the 5' incision.</text>
</comment>
<comment type="subunit">
    <text evidence="1">Interacts with UvrB in an incision complex.</text>
</comment>
<comment type="subcellular location">
    <subcellularLocation>
        <location evidence="1">Cytoplasm</location>
    </subcellularLocation>
</comment>
<comment type="similarity">
    <text evidence="1">Belongs to the UvrC family.</text>
</comment>
<keyword id="KW-0963">Cytoplasm</keyword>
<keyword id="KW-0227">DNA damage</keyword>
<keyword id="KW-0228">DNA excision</keyword>
<keyword id="KW-0234">DNA repair</keyword>
<keyword id="KW-0267">Excision nuclease</keyword>
<keyword id="KW-1185">Reference proteome</keyword>
<keyword id="KW-0742">SOS response</keyword>
<proteinExistence type="inferred from homology"/>
<protein>
    <recommendedName>
        <fullName evidence="1">UvrABC system protein C</fullName>
        <shortName evidence="1">Protein UvrC</shortName>
    </recommendedName>
    <alternativeName>
        <fullName evidence="1">Excinuclease ABC subunit C</fullName>
    </alternativeName>
</protein>
<reference key="1">
    <citation type="journal article" date="2008" name="DNA Res.">
        <title>Comparative genome analysis of Lactobacillus reuteri and Lactobacillus fermentum reveal a genomic island for reuterin and cobalamin production.</title>
        <authorList>
            <person name="Morita H."/>
            <person name="Toh H."/>
            <person name="Fukuda S."/>
            <person name="Horikawa H."/>
            <person name="Oshima K."/>
            <person name="Suzuki T."/>
            <person name="Murakami M."/>
            <person name="Hisamatsu S."/>
            <person name="Kato Y."/>
            <person name="Takizawa T."/>
            <person name="Fukuoka H."/>
            <person name="Yoshimura T."/>
            <person name="Itoh K."/>
            <person name="O'Sullivan D.J."/>
            <person name="McKay L.L."/>
            <person name="Ohno H."/>
            <person name="Kikuchi J."/>
            <person name="Masaoka T."/>
            <person name="Hattori M."/>
        </authorList>
    </citation>
    <scope>NUCLEOTIDE SEQUENCE [LARGE SCALE GENOMIC DNA]</scope>
    <source>
        <strain>NBRC 3956 / LMG 18251</strain>
    </source>
</reference>
<dbReference type="EMBL" id="AP008937">
    <property type="protein sequence ID" value="BAG26961.1"/>
    <property type="molecule type" value="Genomic_DNA"/>
</dbReference>
<dbReference type="RefSeq" id="WP_003682047.1">
    <property type="nucleotide sequence ID" value="NC_010610.1"/>
</dbReference>
<dbReference type="SMR" id="B2GBC9"/>
<dbReference type="GeneID" id="83715042"/>
<dbReference type="KEGG" id="lfe:LAF_0625"/>
<dbReference type="eggNOG" id="COG0322">
    <property type="taxonomic scope" value="Bacteria"/>
</dbReference>
<dbReference type="HOGENOM" id="CLU_014841_3_2_9"/>
<dbReference type="Proteomes" id="UP000001697">
    <property type="component" value="Chromosome"/>
</dbReference>
<dbReference type="GO" id="GO:0005737">
    <property type="term" value="C:cytoplasm"/>
    <property type="evidence" value="ECO:0007669"/>
    <property type="project" value="UniProtKB-SubCell"/>
</dbReference>
<dbReference type="GO" id="GO:0009380">
    <property type="term" value="C:excinuclease repair complex"/>
    <property type="evidence" value="ECO:0007669"/>
    <property type="project" value="InterPro"/>
</dbReference>
<dbReference type="GO" id="GO:0003677">
    <property type="term" value="F:DNA binding"/>
    <property type="evidence" value="ECO:0007669"/>
    <property type="project" value="UniProtKB-UniRule"/>
</dbReference>
<dbReference type="GO" id="GO:0009381">
    <property type="term" value="F:excinuclease ABC activity"/>
    <property type="evidence" value="ECO:0007669"/>
    <property type="project" value="UniProtKB-UniRule"/>
</dbReference>
<dbReference type="GO" id="GO:0006289">
    <property type="term" value="P:nucleotide-excision repair"/>
    <property type="evidence" value="ECO:0007669"/>
    <property type="project" value="UniProtKB-UniRule"/>
</dbReference>
<dbReference type="GO" id="GO:0009432">
    <property type="term" value="P:SOS response"/>
    <property type="evidence" value="ECO:0007669"/>
    <property type="project" value="UniProtKB-UniRule"/>
</dbReference>
<dbReference type="CDD" id="cd10434">
    <property type="entry name" value="GIY-YIG_UvrC_Cho"/>
    <property type="match status" value="1"/>
</dbReference>
<dbReference type="FunFam" id="3.30.420.340:FF:000002">
    <property type="entry name" value="UvrABC system protein C"/>
    <property type="match status" value="1"/>
</dbReference>
<dbReference type="FunFam" id="3.40.1440.10:FF:000001">
    <property type="entry name" value="UvrABC system protein C"/>
    <property type="match status" value="1"/>
</dbReference>
<dbReference type="Gene3D" id="1.10.150.20">
    <property type="entry name" value="5' to 3' exonuclease, C-terminal subdomain"/>
    <property type="match status" value="1"/>
</dbReference>
<dbReference type="Gene3D" id="3.40.1440.10">
    <property type="entry name" value="GIY-YIG endonuclease"/>
    <property type="match status" value="1"/>
</dbReference>
<dbReference type="Gene3D" id="4.10.860.10">
    <property type="entry name" value="UVR domain"/>
    <property type="match status" value="1"/>
</dbReference>
<dbReference type="Gene3D" id="3.30.420.340">
    <property type="entry name" value="UvrC, RNAse H endonuclease domain"/>
    <property type="match status" value="1"/>
</dbReference>
<dbReference type="HAMAP" id="MF_00203">
    <property type="entry name" value="UvrC"/>
    <property type="match status" value="1"/>
</dbReference>
<dbReference type="InterPro" id="IPR000305">
    <property type="entry name" value="GIY-YIG_endonuc"/>
</dbReference>
<dbReference type="InterPro" id="IPR035901">
    <property type="entry name" value="GIY-YIG_endonuc_sf"/>
</dbReference>
<dbReference type="InterPro" id="IPR047296">
    <property type="entry name" value="GIY-YIG_UvrC_Cho"/>
</dbReference>
<dbReference type="InterPro" id="IPR010994">
    <property type="entry name" value="RuvA_2-like"/>
</dbReference>
<dbReference type="InterPro" id="IPR001943">
    <property type="entry name" value="UVR_dom"/>
</dbReference>
<dbReference type="InterPro" id="IPR036876">
    <property type="entry name" value="UVR_dom_sf"/>
</dbReference>
<dbReference type="InterPro" id="IPR050066">
    <property type="entry name" value="UvrABC_protein_C"/>
</dbReference>
<dbReference type="InterPro" id="IPR004791">
    <property type="entry name" value="UvrC"/>
</dbReference>
<dbReference type="InterPro" id="IPR001162">
    <property type="entry name" value="UvrC_RNase_H_dom"/>
</dbReference>
<dbReference type="InterPro" id="IPR038476">
    <property type="entry name" value="UvrC_RNase_H_dom_sf"/>
</dbReference>
<dbReference type="NCBIfam" id="TIGR00194">
    <property type="entry name" value="uvrC"/>
    <property type="match status" value="1"/>
</dbReference>
<dbReference type="PANTHER" id="PTHR30562:SF1">
    <property type="entry name" value="UVRABC SYSTEM PROTEIN C"/>
    <property type="match status" value="1"/>
</dbReference>
<dbReference type="PANTHER" id="PTHR30562">
    <property type="entry name" value="UVRC/OXIDOREDUCTASE"/>
    <property type="match status" value="1"/>
</dbReference>
<dbReference type="Pfam" id="PF01541">
    <property type="entry name" value="GIY-YIG"/>
    <property type="match status" value="1"/>
</dbReference>
<dbReference type="Pfam" id="PF14520">
    <property type="entry name" value="HHH_5"/>
    <property type="match status" value="1"/>
</dbReference>
<dbReference type="Pfam" id="PF02151">
    <property type="entry name" value="UVR"/>
    <property type="match status" value="1"/>
</dbReference>
<dbReference type="Pfam" id="PF22920">
    <property type="entry name" value="UvrC_RNaseH"/>
    <property type="match status" value="1"/>
</dbReference>
<dbReference type="Pfam" id="PF08459">
    <property type="entry name" value="UvrC_RNaseH_dom"/>
    <property type="match status" value="1"/>
</dbReference>
<dbReference type="SMART" id="SM00465">
    <property type="entry name" value="GIYc"/>
    <property type="match status" value="1"/>
</dbReference>
<dbReference type="SUPFAM" id="SSF46600">
    <property type="entry name" value="C-terminal UvrC-binding domain of UvrB"/>
    <property type="match status" value="1"/>
</dbReference>
<dbReference type="SUPFAM" id="SSF82771">
    <property type="entry name" value="GIY-YIG endonuclease"/>
    <property type="match status" value="1"/>
</dbReference>
<dbReference type="SUPFAM" id="SSF47781">
    <property type="entry name" value="RuvA domain 2-like"/>
    <property type="match status" value="1"/>
</dbReference>
<dbReference type="PROSITE" id="PS50164">
    <property type="entry name" value="GIY_YIG"/>
    <property type="match status" value="1"/>
</dbReference>
<dbReference type="PROSITE" id="PS50151">
    <property type="entry name" value="UVR"/>
    <property type="match status" value="1"/>
</dbReference>
<dbReference type="PROSITE" id="PS50165">
    <property type="entry name" value="UVRC"/>
    <property type="match status" value="1"/>
</dbReference>
<gene>
    <name evidence="1" type="primary">uvrC</name>
    <name type="ordered locus">LAF_0625</name>
</gene>